<sequence length="802" mass="85349">MMMDEDVEQATLVSYSDKPRTFPDMRSKTYSPLIIRILRNLNVRALSVLLLLSFGGIFYMGARTSPIIVFVFVVCIISFMLSVYLTKWVLAKDEGPPEMVQISDAIRDGAEGFLRTQYGTISKMAFLLAFVILCIYLFRNLTPQQEASGLGRTMSAYITVAAFLLGALCSGIAGYVGMWVSVRANVRVSSAARRSAREALQIAVRAGGFSALVVVGMAVIGIAILYSTFYVWLDVDSPGSMKVTDLPLLLVGYGFGASFVALFAQLGGGIYTKGADVGADLVGKVEHGIPEDDPRNPAVIADLVGDNVGDCAARGADLFESIAAEIISAMILGGTMAQKCKIEDPSGFILFPLVVHSFDLVISSIGILSIKGTRNASVKSPVEDPMVVLQKGYSLTIILAVLTFGASTRWLLYTEQAPSAWLNFFMCGLVGIITAYVFVWISRYYTDYKYEPVRTLALASSTGHGTNIIAGVSLGLESTALPVLVISVAIISAFWLGNTSGLIDEKGNPTGGLFGTAVATMGMLSTAAYVLTMDMFGPIADNAGGIVEMSQQPESVREITDVLDAVGNTTKATTKGFAIGSAALASFLLFSAYMDEVSAFANVSFKEVDIAIPEVFIGGLLGAMLIFLFSAWACAAVGRTAQEVVNEVRRQFIERPGIMDYKEKPDYGRCVAIVASSALREMIKPGALAIISPIAVGFVFRILGYYTGQPLLGAKVVAAMLMFATVCGILMALFLNTAGGAWDNAKKYIETGALGGKGSDSHKAAVTGDTVGDPFKDTAGPSIHVLIKMLATITLVMAPIFL</sequence>
<evidence type="ECO:0000250" key="1"/>
<evidence type="ECO:0000255" key="2"/>
<evidence type="ECO:0000305" key="3"/>
<comment type="catalytic activity">
    <reaction>
        <text>diphosphate + H2O + H(+)(in) = 2 phosphate + 2 H(+)(out)</text>
        <dbReference type="Rhea" id="RHEA:13973"/>
        <dbReference type="ChEBI" id="CHEBI:15377"/>
        <dbReference type="ChEBI" id="CHEBI:15378"/>
        <dbReference type="ChEBI" id="CHEBI:33019"/>
        <dbReference type="ChEBI" id="CHEBI:43474"/>
        <dbReference type="EC" id="7.1.3.1"/>
    </reaction>
</comment>
<comment type="subunit">
    <text evidence="1">Monomer.</text>
</comment>
<comment type="subcellular location">
    <subcellularLocation>
        <location evidence="1">Golgi apparatus membrane</location>
        <topology evidence="1">Multi-pass membrane protein</topology>
    </subcellularLocation>
</comment>
<comment type="similarity">
    <text evidence="3">Belongs to the H(+)-translocating pyrophosphatase (TC 3.A.10) family. K(+)-insensitive subfamily.</text>
</comment>
<comment type="caution">
    <text evidence="3">It is uncertain whether Met-1, Met-2 or Met-3 is the initiator.</text>
</comment>
<name>AVPX_ARATH</name>
<gene>
    <name type="primary">AVPL2</name>
    <name type="ordered locus">At1g16780</name>
    <name type="ORF">F17F16.2</name>
</gene>
<accession>Q9FWR2</accession>
<accession>F4I4J7</accession>
<reference key="1">
    <citation type="journal article" date="2000" name="Nature">
        <title>Sequence and analysis of chromosome 1 of the plant Arabidopsis thaliana.</title>
        <authorList>
            <person name="Theologis A."/>
            <person name="Ecker J.R."/>
            <person name="Palm C.J."/>
            <person name="Federspiel N.A."/>
            <person name="Kaul S."/>
            <person name="White O."/>
            <person name="Alonso J."/>
            <person name="Altafi H."/>
            <person name="Araujo R."/>
            <person name="Bowman C.L."/>
            <person name="Brooks S.Y."/>
            <person name="Buehler E."/>
            <person name="Chan A."/>
            <person name="Chao Q."/>
            <person name="Chen H."/>
            <person name="Cheuk R.F."/>
            <person name="Chin C.W."/>
            <person name="Chung M.K."/>
            <person name="Conn L."/>
            <person name="Conway A.B."/>
            <person name="Conway A.R."/>
            <person name="Creasy T.H."/>
            <person name="Dewar K."/>
            <person name="Dunn P."/>
            <person name="Etgu P."/>
            <person name="Feldblyum T.V."/>
            <person name="Feng J.-D."/>
            <person name="Fong B."/>
            <person name="Fujii C.Y."/>
            <person name="Gill J.E."/>
            <person name="Goldsmith A.D."/>
            <person name="Haas B."/>
            <person name="Hansen N.F."/>
            <person name="Hughes B."/>
            <person name="Huizar L."/>
            <person name="Hunter J.L."/>
            <person name="Jenkins J."/>
            <person name="Johnson-Hopson C."/>
            <person name="Khan S."/>
            <person name="Khaykin E."/>
            <person name="Kim C.J."/>
            <person name="Koo H.L."/>
            <person name="Kremenetskaia I."/>
            <person name="Kurtz D.B."/>
            <person name="Kwan A."/>
            <person name="Lam B."/>
            <person name="Langin-Hooper S."/>
            <person name="Lee A."/>
            <person name="Lee J.M."/>
            <person name="Lenz C.A."/>
            <person name="Li J.H."/>
            <person name="Li Y.-P."/>
            <person name="Lin X."/>
            <person name="Liu S.X."/>
            <person name="Liu Z.A."/>
            <person name="Luros J.S."/>
            <person name="Maiti R."/>
            <person name="Marziali A."/>
            <person name="Militscher J."/>
            <person name="Miranda M."/>
            <person name="Nguyen M."/>
            <person name="Nierman W.C."/>
            <person name="Osborne B.I."/>
            <person name="Pai G."/>
            <person name="Peterson J."/>
            <person name="Pham P.K."/>
            <person name="Rizzo M."/>
            <person name="Rooney T."/>
            <person name="Rowley D."/>
            <person name="Sakano H."/>
            <person name="Salzberg S.L."/>
            <person name="Schwartz J.R."/>
            <person name="Shinn P."/>
            <person name="Southwick A.M."/>
            <person name="Sun H."/>
            <person name="Tallon L.J."/>
            <person name="Tambunga G."/>
            <person name="Toriumi M.J."/>
            <person name="Town C.D."/>
            <person name="Utterback T."/>
            <person name="Van Aken S."/>
            <person name="Vaysberg M."/>
            <person name="Vysotskaia V.S."/>
            <person name="Walker M."/>
            <person name="Wu D."/>
            <person name="Yu G."/>
            <person name="Fraser C.M."/>
            <person name="Venter J.C."/>
            <person name="Davis R.W."/>
        </authorList>
    </citation>
    <scope>NUCLEOTIDE SEQUENCE [LARGE SCALE GENOMIC DNA]</scope>
    <source>
        <strain>cv. Columbia</strain>
    </source>
</reference>
<reference key="2">
    <citation type="journal article" date="2017" name="Plant J.">
        <title>Araport11: a complete reannotation of the Arabidopsis thaliana reference genome.</title>
        <authorList>
            <person name="Cheng C.Y."/>
            <person name="Krishnakumar V."/>
            <person name="Chan A.P."/>
            <person name="Thibaud-Nissen F."/>
            <person name="Schobel S."/>
            <person name="Town C.D."/>
        </authorList>
    </citation>
    <scope>GENOME REANNOTATION</scope>
    <source>
        <strain>cv. Columbia</strain>
    </source>
</reference>
<dbReference type="EC" id="7.1.3.1"/>
<dbReference type="EMBL" id="AC026237">
    <property type="protein sequence ID" value="AAG09080.1"/>
    <property type="molecule type" value="Genomic_DNA"/>
</dbReference>
<dbReference type="EMBL" id="CP002684">
    <property type="protein sequence ID" value="AEE29496.2"/>
    <property type="molecule type" value="Genomic_DNA"/>
</dbReference>
<dbReference type="EMBL" id="CP002684">
    <property type="protein sequence ID" value="ANM60769.1"/>
    <property type="molecule type" value="Genomic_DNA"/>
</dbReference>
<dbReference type="EMBL" id="CP002684">
    <property type="protein sequence ID" value="ANM60770.1"/>
    <property type="molecule type" value="Genomic_DNA"/>
</dbReference>
<dbReference type="PIR" id="C86303">
    <property type="entry name" value="C86303"/>
</dbReference>
<dbReference type="RefSeq" id="NP_001319021.1">
    <property type="nucleotide sequence ID" value="NM_001332258.1"/>
</dbReference>
<dbReference type="RefSeq" id="NP_001323031.1">
    <property type="nucleotide sequence ID" value="NM_001332259.1"/>
</dbReference>
<dbReference type="RefSeq" id="NP_001323032.1">
    <property type="nucleotide sequence ID" value="NM_001332260.1"/>
</dbReference>
<dbReference type="SMR" id="Q9FWR2"/>
<dbReference type="BioGRID" id="23489">
    <property type="interactions" value="1"/>
</dbReference>
<dbReference type="FunCoup" id="Q9FWR2">
    <property type="interactions" value="51"/>
</dbReference>
<dbReference type="STRING" id="3702.Q9FWR2"/>
<dbReference type="PaxDb" id="3702-AT1G16780.1"/>
<dbReference type="ProteomicsDB" id="240934"/>
<dbReference type="EnsemblPlants" id="AT1G16780.1">
    <property type="protein sequence ID" value="AT1G16780.1"/>
    <property type="gene ID" value="AT1G16780"/>
</dbReference>
<dbReference type="EnsemblPlants" id="AT1G16780.2">
    <property type="protein sequence ID" value="AT1G16780.2"/>
    <property type="gene ID" value="AT1G16780"/>
</dbReference>
<dbReference type="EnsemblPlants" id="AT1G16780.3">
    <property type="protein sequence ID" value="AT1G16780.3"/>
    <property type="gene ID" value="AT1G16780"/>
</dbReference>
<dbReference type="GeneID" id="838249"/>
<dbReference type="Gramene" id="AT1G16780.1">
    <property type="protein sequence ID" value="AT1G16780.1"/>
    <property type="gene ID" value="AT1G16780"/>
</dbReference>
<dbReference type="Gramene" id="AT1G16780.2">
    <property type="protein sequence ID" value="AT1G16780.2"/>
    <property type="gene ID" value="AT1G16780"/>
</dbReference>
<dbReference type="Gramene" id="AT1G16780.3">
    <property type="protein sequence ID" value="AT1G16780.3"/>
    <property type="gene ID" value="AT1G16780"/>
</dbReference>
<dbReference type="KEGG" id="ath:AT1G16780"/>
<dbReference type="Araport" id="AT1G16780"/>
<dbReference type="TAIR" id="AT1G16780">
    <property type="gene designation" value="VHP2"/>
</dbReference>
<dbReference type="eggNOG" id="ENOG502QPJC">
    <property type="taxonomic scope" value="Eukaryota"/>
</dbReference>
<dbReference type="HOGENOM" id="CLU_008743_3_1_1"/>
<dbReference type="InParanoid" id="Q9FWR2"/>
<dbReference type="OMA" id="VWISRYY"/>
<dbReference type="OrthoDB" id="1078438at2759"/>
<dbReference type="PhylomeDB" id="Q9FWR2"/>
<dbReference type="BioCyc" id="ARA:AT1G16780-MONOMER"/>
<dbReference type="PRO" id="PR:Q9FWR2"/>
<dbReference type="Proteomes" id="UP000006548">
    <property type="component" value="Chromosome 1"/>
</dbReference>
<dbReference type="ExpressionAtlas" id="Q9FWR2">
    <property type="expression patterns" value="baseline and differential"/>
</dbReference>
<dbReference type="GO" id="GO:0000139">
    <property type="term" value="C:Golgi membrane"/>
    <property type="evidence" value="ECO:0007669"/>
    <property type="project" value="UniProtKB-SubCell"/>
</dbReference>
<dbReference type="GO" id="GO:0009678">
    <property type="term" value="F:diphosphate hydrolysis-driven proton transmembrane transporter activity"/>
    <property type="evidence" value="ECO:0007669"/>
    <property type="project" value="UniProtKB-EC"/>
</dbReference>
<dbReference type="GO" id="GO:0004427">
    <property type="term" value="F:inorganic diphosphate phosphatase activity"/>
    <property type="evidence" value="ECO:0007669"/>
    <property type="project" value="InterPro"/>
</dbReference>
<dbReference type="GO" id="GO:0046872">
    <property type="term" value="F:metal ion binding"/>
    <property type="evidence" value="ECO:0007669"/>
    <property type="project" value="UniProtKB-KW"/>
</dbReference>
<dbReference type="HAMAP" id="MF_01129">
    <property type="entry name" value="PPase_energized_pump"/>
    <property type="match status" value="1"/>
</dbReference>
<dbReference type="InterPro" id="IPR004131">
    <property type="entry name" value="PPase-energised_H-pump"/>
</dbReference>
<dbReference type="NCBIfam" id="NF001953">
    <property type="entry name" value="PRK00733.2-1"/>
    <property type="match status" value="1"/>
</dbReference>
<dbReference type="NCBIfam" id="NF001960">
    <property type="entry name" value="PRK00733.3-5"/>
    <property type="match status" value="1"/>
</dbReference>
<dbReference type="NCBIfam" id="TIGR01104">
    <property type="entry name" value="V_PPase"/>
    <property type="match status" value="1"/>
</dbReference>
<dbReference type="PANTHER" id="PTHR31998">
    <property type="entry name" value="K(+)-INSENSITIVE PYROPHOSPHATE-ENERGIZED PROTON PUMP"/>
    <property type="match status" value="1"/>
</dbReference>
<dbReference type="Pfam" id="PF03030">
    <property type="entry name" value="H_PPase"/>
    <property type="match status" value="1"/>
</dbReference>
<dbReference type="PIRSF" id="PIRSF001265">
    <property type="entry name" value="H+-PPase"/>
    <property type="match status" value="1"/>
</dbReference>
<proteinExistence type="inferred from homology"/>
<keyword id="KW-0333">Golgi apparatus</keyword>
<keyword id="KW-0375">Hydrogen ion transport</keyword>
<keyword id="KW-0406">Ion transport</keyword>
<keyword id="KW-0460">Magnesium</keyword>
<keyword id="KW-0472">Membrane</keyword>
<keyword id="KW-0479">Metal-binding</keyword>
<keyword id="KW-1185">Reference proteome</keyword>
<keyword id="KW-1278">Translocase</keyword>
<keyword id="KW-0812">Transmembrane</keyword>
<keyword id="KW-1133">Transmembrane helix</keyword>
<keyword id="KW-0813">Transport</keyword>
<protein>
    <recommendedName>
        <fullName>Pyrophosphate-energized membrane proton pump 3</fullName>
        <ecNumber>7.1.3.1</ecNumber>
    </recommendedName>
    <alternativeName>
        <fullName>AVP1-like protein 2</fullName>
    </alternativeName>
    <alternativeName>
        <fullName>Pyrophosphate-energized inorganic pyrophosphatase 3</fullName>
        <shortName>H(+)-PPase 3</shortName>
    </alternativeName>
</protein>
<feature type="chain" id="PRO_0000217041" description="Pyrophosphate-energized membrane proton pump 3">
    <location>
        <begin position="1"/>
        <end position="802"/>
    </location>
</feature>
<feature type="transmembrane region" description="Helical" evidence="2">
    <location>
        <begin position="41"/>
        <end position="61"/>
    </location>
</feature>
<feature type="transmembrane region" description="Helical" evidence="2">
    <location>
        <begin position="66"/>
        <end position="86"/>
    </location>
</feature>
<feature type="transmembrane region" description="Helical" evidence="2">
    <location>
        <begin position="118"/>
        <end position="138"/>
    </location>
</feature>
<feature type="transmembrane region" description="Helical" evidence="2">
    <location>
        <begin position="160"/>
        <end position="180"/>
    </location>
</feature>
<feature type="transmembrane region" description="Helical" evidence="2">
    <location>
        <begin position="206"/>
        <end position="226"/>
    </location>
</feature>
<feature type="transmembrane region" description="Helical" evidence="2">
    <location>
        <begin position="246"/>
        <end position="266"/>
    </location>
</feature>
<feature type="transmembrane region" description="Helical" evidence="2">
    <location>
        <begin position="348"/>
        <end position="368"/>
    </location>
</feature>
<feature type="transmembrane region" description="Helical" evidence="2">
    <location>
        <begin position="386"/>
        <end position="406"/>
    </location>
</feature>
<feature type="transmembrane region" description="Helical" evidence="2">
    <location>
        <begin position="421"/>
        <end position="441"/>
    </location>
</feature>
<feature type="transmembrane region" description="Helical" evidence="2">
    <location>
        <begin position="468"/>
        <end position="491"/>
    </location>
</feature>
<feature type="transmembrane region" description="Helical" evidence="2">
    <location>
        <begin position="511"/>
        <end position="531"/>
    </location>
</feature>
<feature type="transmembrane region" description="Helical" evidence="2">
    <location>
        <begin position="577"/>
        <end position="597"/>
    </location>
</feature>
<feature type="transmembrane region" description="Helical" evidence="2">
    <location>
        <begin position="615"/>
        <end position="635"/>
    </location>
</feature>
<feature type="transmembrane region" description="Helical" evidence="2">
    <location>
        <begin position="686"/>
        <end position="706"/>
    </location>
</feature>
<feature type="transmembrane region" description="Helical" evidence="2">
    <location>
        <begin position="716"/>
        <end position="736"/>
    </location>
</feature>
<feature type="transmembrane region" description="Helical" evidence="2">
    <location>
        <begin position="782"/>
        <end position="802"/>
    </location>
</feature>
<feature type="binding site" evidence="1">
    <location>
        <position position="273"/>
    </location>
    <ligand>
        <name>substrate</name>
    </ligand>
</feature>
<feature type="binding site" evidence="1">
    <location>
        <position position="276"/>
    </location>
    <ligand>
        <name>Mg(2+)</name>
        <dbReference type="ChEBI" id="CHEBI:18420"/>
        <label>1</label>
    </ligand>
</feature>
<feature type="binding site" evidence="1">
    <location>
        <position position="276"/>
    </location>
    <ligand>
        <name>Mg(2+)</name>
        <dbReference type="ChEBI" id="CHEBI:18420"/>
        <label>2</label>
    </ligand>
</feature>
<feature type="binding site" evidence="1">
    <location>
        <position position="280"/>
    </location>
    <ligand>
        <name>Mg(2+)</name>
        <dbReference type="ChEBI" id="CHEBI:18420"/>
        <label>1</label>
    </ligand>
</feature>
<feature type="binding site" evidence="1">
    <location>
        <position position="306"/>
    </location>
    <ligand>
        <name>Mg(2+)</name>
        <dbReference type="ChEBI" id="CHEBI:18420"/>
        <label>3</label>
    </ligand>
</feature>
<feature type="binding site" evidence="1">
    <location>
        <position position="541"/>
    </location>
    <ligand>
        <name>Mg(2+)</name>
        <dbReference type="ChEBI" id="CHEBI:18420"/>
        <label>3</label>
    </ligand>
</feature>
<feature type="binding site" evidence="1">
    <location>
        <position position="568"/>
    </location>
    <ligand>
        <name>Mg(2+)</name>
        <dbReference type="ChEBI" id="CHEBI:18420"/>
        <label>4</label>
    </ligand>
</feature>
<feature type="binding site" evidence="1">
    <location>
        <position position="743"/>
    </location>
    <ligand>
        <name>Mg(2+)</name>
        <dbReference type="ChEBI" id="CHEBI:18420"/>
        <label>4</label>
    </ligand>
</feature>
<feature type="binding site" evidence="1">
    <location>
        <position position="773"/>
    </location>
    <ligand>
        <name>Mg(2+)</name>
        <dbReference type="ChEBI" id="CHEBI:18420"/>
        <label>2</label>
    </ligand>
</feature>
<feature type="binding site" evidence="1">
    <location>
        <position position="776"/>
    </location>
    <ligand>
        <name>substrate</name>
    </ligand>
</feature>
<feature type="site" description="Important for proton transport" evidence="1">
    <location>
        <position position="310"/>
    </location>
</feature>
<feature type="site" description="Important for proton transport" evidence="1">
    <location>
        <position position="317"/>
    </location>
</feature>
<feature type="site" description="Important for proton transport" evidence="1">
    <location>
        <position position="777"/>
    </location>
</feature>
<feature type="site" description="Important for proton transport" evidence="1">
    <location>
        <position position="788"/>
    </location>
</feature>
<organism>
    <name type="scientific">Arabidopsis thaliana</name>
    <name type="common">Mouse-ear cress</name>
    <dbReference type="NCBI Taxonomy" id="3702"/>
    <lineage>
        <taxon>Eukaryota</taxon>
        <taxon>Viridiplantae</taxon>
        <taxon>Streptophyta</taxon>
        <taxon>Embryophyta</taxon>
        <taxon>Tracheophyta</taxon>
        <taxon>Spermatophyta</taxon>
        <taxon>Magnoliopsida</taxon>
        <taxon>eudicotyledons</taxon>
        <taxon>Gunneridae</taxon>
        <taxon>Pentapetalae</taxon>
        <taxon>rosids</taxon>
        <taxon>malvids</taxon>
        <taxon>Brassicales</taxon>
        <taxon>Brassicaceae</taxon>
        <taxon>Camelineae</taxon>
        <taxon>Arabidopsis</taxon>
    </lineage>
</organism>